<protein>
    <recommendedName>
        <fullName>Putative pyruvate decarboxylase C13A11.06</fullName>
        <ecNumber>4.1.1.1</ecNumber>
    </recommendedName>
</protein>
<evidence type="ECO:0000250" key="1"/>
<evidence type="ECO:0000250" key="2">
    <source>
        <dbReference type="UniProtKB" id="P06169"/>
    </source>
</evidence>
<evidence type="ECO:0000305" key="3"/>
<feature type="chain" id="PRO_0000090767" description="Putative pyruvate decarboxylase C13A11.06">
    <location>
        <begin position="1"/>
        <end position="571"/>
    </location>
</feature>
<feature type="binding site" evidence="2">
    <location>
        <position position="29"/>
    </location>
    <ligand>
        <name>pyruvate</name>
        <dbReference type="ChEBI" id="CHEBI:15361"/>
        <note>ligand shared between two neighboring subunits</note>
    </ligand>
</feature>
<feature type="binding site" evidence="2">
    <location>
        <position position="118"/>
    </location>
    <ligand>
        <name>pyruvate</name>
        <dbReference type="ChEBI" id="CHEBI:15361"/>
        <note>ligand shared between two neighboring subunits</note>
    </ligand>
</feature>
<feature type="binding site" evidence="2">
    <location>
        <position position="395"/>
    </location>
    <ligand>
        <name>thiamine diphosphate</name>
        <dbReference type="ChEBI" id="CHEBI:58937"/>
    </ligand>
</feature>
<feature type="binding site" evidence="2">
    <location>
        <begin position="418"/>
        <end position="420"/>
    </location>
    <ligand>
        <name>thiamine diphosphate</name>
        <dbReference type="ChEBI" id="CHEBI:58937"/>
    </ligand>
</feature>
<feature type="binding site" evidence="2">
    <location>
        <position position="450"/>
    </location>
    <ligand>
        <name>Mg(2+)</name>
        <dbReference type="ChEBI" id="CHEBI:18420"/>
    </ligand>
</feature>
<feature type="binding site" evidence="2">
    <location>
        <begin position="451"/>
        <end position="452"/>
    </location>
    <ligand>
        <name>thiamine diphosphate</name>
        <dbReference type="ChEBI" id="CHEBI:58937"/>
    </ligand>
</feature>
<feature type="binding site" evidence="2">
    <location>
        <begin position="477"/>
        <end position="482"/>
    </location>
    <ligand>
        <name>thiamine diphosphate</name>
        <dbReference type="ChEBI" id="CHEBI:58937"/>
    </ligand>
</feature>
<feature type="binding site" evidence="2">
    <location>
        <position position="477"/>
    </location>
    <ligand>
        <name>Mg(2+)</name>
        <dbReference type="ChEBI" id="CHEBI:18420"/>
    </ligand>
</feature>
<feature type="binding site" evidence="2">
    <location>
        <position position="479"/>
    </location>
    <ligand>
        <name>Mg(2+)</name>
        <dbReference type="ChEBI" id="CHEBI:18420"/>
    </ligand>
</feature>
<feature type="binding site" evidence="2">
    <location>
        <position position="483"/>
    </location>
    <ligand>
        <name>pyruvate</name>
        <dbReference type="ChEBI" id="CHEBI:15361"/>
        <note>ligand shared between two neighboring subunits</note>
    </ligand>
</feature>
<keyword id="KW-0210">Decarboxylase</keyword>
<keyword id="KW-0456">Lyase</keyword>
<keyword id="KW-0460">Magnesium</keyword>
<keyword id="KW-0479">Metal-binding</keyword>
<keyword id="KW-1185">Reference proteome</keyword>
<keyword id="KW-0786">Thiamine pyrophosphate</keyword>
<accession>Q09737</accession>
<comment type="catalytic activity">
    <reaction>
        <text>a 2-oxocarboxylate + H(+) = an aldehyde + CO2</text>
        <dbReference type="Rhea" id="RHEA:11628"/>
        <dbReference type="ChEBI" id="CHEBI:15378"/>
        <dbReference type="ChEBI" id="CHEBI:16526"/>
        <dbReference type="ChEBI" id="CHEBI:17478"/>
        <dbReference type="ChEBI" id="CHEBI:35179"/>
        <dbReference type="EC" id="4.1.1.1"/>
    </reaction>
</comment>
<comment type="catalytic activity">
    <reaction evidence="2">
        <text>pyruvate + H(+) = acetaldehyde + CO2</text>
        <dbReference type="Rhea" id="RHEA:45484"/>
        <dbReference type="ChEBI" id="CHEBI:15343"/>
        <dbReference type="ChEBI" id="CHEBI:15361"/>
        <dbReference type="ChEBI" id="CHEBI:15378"/>
        <dbReference type="ChEBI" id="CHEBI:16526"/>
    </reaction>
</comment>
<comment type="cofactor">
    <cofactor evidence="2">
        <name>Mg(2+)</name>
        <dbReference type="ChEBI" id="CHEBI:18420"/>
    </cofactor>
    <text evidence="2">Binds 1 Mg(2+) per subunit.</text>
</comment>
<comment type="cofactor">
    <cofactor evidence="2">
        <name>thiamine diphosphate</name>
        <dbReference type="ChEBI" id="CHEBI:58937"/>
    </cofactor>
    <text evidence="2">Binds 1 thiamine pyrophosphate per subunit.</text>
</comment>
<comment type="subunit">
    <text evidence="1">Homotetramer.</text>
</comment>
<comment type="similarity">
    <text evidence="3">Belongs to the TPP enzyme family.</text>
</comment>
<name>PDC1_SCHPO</name>
<gene>
    <name type="ORF">SPAC13A11.06</name>
    <name type="ORF">SPAC3H8.01</name>
</gene>
<dbReference type="EC" id="4.1.1.1"/>
<dbReference type="EMBL" id="CU329670">
    <property type="protein sequence ID" value="CAA90807.2"/>
    <property type="molecule type" value="Genomic_DNA"/>
</dbReference>
<dbReference type="PIR" id="T38759">
    <property type="entry name" value="T38759"/>
</dbReference>
<dbReference type="RefSeq" id="XP_001713041.1">
    <property type="nucleotide sequence ID" value="XM_001712989.2"/>
</dbReference>
<dbReference type="SMR" id="Q09737"/>
<dbReference type="BioGRID" id="280554">
    <property type="interactions" value="22"/>
</dbReference>
<dbReference type="FunCoup" id="Q09737">
    <property type="interactions" value="173"/>
</dbReference>
<dbReference type="STRING" id="284812.Q09737"/>
<dbReference type="PaxDb" id="4896-SPAC13A11.06.1"/>
<dbReference type="EnsemblFungi" id="SPAC13A11.06.1">
    <property type="protein sequence ID" value="SPAC13A11.06.1:pep"/>
    <property type="gene ID" value="SPAC13A11.06"/>
</dbReference>
<dbReference type="PomBase" id="SPAC13A11.06"/>
<dbReference type="VEuPathDB" id="FungiDB:SPAC13A11.06"/>
<dbReference type="eggNOG" id="KOG1184">
    <property type="taxonomic scope" value="Eukaryota"/>
</dbReference>
<dbReference type="HOGENOM" id="CLU_013748_0_2_1"/>
<dbReference type="InParanoid" id="Q09737"/>
<dbReference type="OMA" id="IHGPEQR"/>
<dbReference type="PhylomeDB" id="Q09737"/>
<dbReference type="CD-CODE" id="0808F6DD">
    <property type="entry name" value="P-body"/>
</dbReference>
<dbReference type="PRO" id="PR:Q09737"/>
<dbReference type="Proteomes" id="UP000002485">
    <property type="component" value="Chromosome I"/>
</dbReference>
<dbReference type="GO" id="GO:0005829">
    <property type="term" value="C:cytosol"/>
    <property type="evidence" value="ECO:0007005"/>
    <property type="project" value="PomBase"/>
</dbReference>
<dbReference type="GO" id="GO:0005634">
    <property type="term" value="C:nucleus"/>
    <property type="evidence" value="ECO:0007005"/>
    <property type="project" value="PomBase"/>
</dbReference>
<dbReference type="GO" id="GO:0000287">
    <property type="term" value="F:magnesium ion binding"/>
    <property type="evidence" value="ECO:0007669"/>
    <property type="project" value="InterPro"/>
</dbReference>
<dbReference type="GO" id="GO:0004737">
    <property type="term" value="F:pyruvate decarboxylase activity"/>
    <property type="evidence" value="ECO:0000318"/>
    <property type="project" value="GO_Central"/>
</dbReference>
<dbReference type="GO" id="GO:0030976">
    <property type="term" value="F:thiamine pyrophosphate binding"/>
    <property type="evidence" value="ECO:0007669"/>
    <property type="project" value="InterPro"/>
</dbReference>
<dbReference type="GO" id="GO:0000949">
    <property type="term" value="P:aromatic amino acid family catabolic process to alcohol via Ehrlich pathway"/>
    <property type="evidence" value="ECO:0000318"/>
    <property type="project" value="GO_Central"/>
</dbReference>
<dbReference type="GO" id="GO:0019655">
    <property type="term" value="P:glycolytic fermentation to ethanol"/>
    <property type="evidence" value="ECO:0000266"/>
    <property type="project" value="PomBase"/>
</dbReference>
<dbReference type="CDD" id="cd02005">
    <property type="entry name" value="TPP_PDC_IPDC"/>
    <property type="match status" value="1"/>
</dbReference>
<dbReference type="CDD" id="cd07038">
    <property type="entry name" value="TPP_PYR_PDC_IPDC_like"/>
    <property type="match status" value="1"/>
</dbReference>
<dbReference type="FunFam" id="3.40.50.970:FF:000019">
    <property type="entry name" value="Pyruvate decarboxylase isozyme"/>
    <property type="match status" value="1"/>
</dbReference>
<dbReference type="FunFam" id="3.40.50.970:FF:000024">
    <property type="entry name" value="Pyruvate decarboxylase isozyme"/>
    <property type="match status" value="1"/>
</dbReference>
<dbReference type="Gene3D" id="3.40.50.970">
    <property type="match status" value="2"/>
</dbReference>
<dbReference type="Gene3D" id="3.40.50.1220">
    <property type="entry name" value="TPP-binding domain"/>
    <property type="match status" value="1"/>
</dbReference>
<dbReference type="InterPro" id="IPR029035">
    <property type="entry name" value="DHS-like_NAD/FAD-binding_dom"/>
</dbReference>
<dbReference type="InterPro" id="IPR012110">
    <property type="entry name" value="PDC/IPDC-like"/>
</dbReference>
<dbReference type="InterPro" id="IPR029061">
    <property type="entry name" value="THDP-binding"/>
</dbReference>
<dbReference type="InterPro" id="IPR012000">
    <property type="entry name" value="Thiamin_PyroP_enz_cen_dom"/>
</dbReference>
<dbReference type="InterPro" id="IPR012001">
    <property type="entry name" value="Thiamin_PyroP_enz_TPP-bd_dom"/>
</dbReference>
<dbReference type="InterPro" id="IPR011766">
    <property type="entry name" value="TPP_enzyme_TPP-bd"/>
</dbReference>
<dbReference type="InterPro" id="IPR047214">
    <property type="entry name" value="TPP_PDC_IPDC"/>
</dbReference>
<dbReference type="InterPro" id="IPR047213">
    <property type="entry name" value="TPP_PYR_PDC_IPDC-like"/>
</dbReference>
<dbReference type="PANTHER" id="PTHR43452">
    <property type="entry name" value="PYRUVATE DECARBOXYLASE"/>
    <property type="match status" value="1"/>
</dbReference>
<dbReference type="PANTHER" id="PTHR43452:SF30">
    <property type="entry name" value="PYRUVATE DECARBOXYLASE ISOZYME 1-RELATED"/>
    <property type="match status" value="1"/>
</dbReference>
<dbReference type="Pfam" id="PF02775">
    <property type="entry name" value="TPP_enzyme_C"/>
    <property type="match status" value="1"/>
</dbReference>
<dbReference type="Pfam" id="PF00205">
    <property type="entry name" value="TPP_enzyme_M"/>
    <property type="match status" value="1"/>
</dbReference>
<dbReference type="Pfam" id="PF02776">
    <property type="entry name" value="TPP_enzyme_N"/>
    <property type="match status" value="1"/>
</dbReference>
<dbReference type="PIRSF" id="PIRSF036565">
    <property type="entry name" value="Pyruvt_ip_decrb"/>
    <property type="match status" value="1"/>
</dbReference>
<dbReference type="SUPFAM" id="SSF52467">
    <property type="entry name" value="DHS-like NAD/FAD-binding domain"/>
    <property type="match status" value="1"/>
</dbReference>
<dbReference type="SUPFAM" id="SSF52518">
    <property type="entry name" value="Thiamin diphosphate-binding fold (THDP-binding)"/>
    <property type="match status" value="2"/>
</dbReference>
<proteinExistence type="inferred from homology"/>
<sequence>MSGDILVGEYLFKRLEQLGVKSILGVPGDFNLALLDLIEKVGDEKFRWVGNTNELNGAYAADGYARVNGLSAIVTTFGVGELSAINGVAGSYAEHVPVVHIVGMPSTKVQDTGALLHHTLGDGDFRTFMDMFKKVSAYSIMIDNGNDAAEKIDEALSICYKKARPVYIGIPSDAGYFKASSSNLGKRLKLEEDTNDPAVEQEVINHISEMVVNAKKPVILIDACAVRHRVVPEVHELIKLTHFPTYVTPMGKSAIDETSQFFDGVYVGSISDPEVKDRIESTDLLLSIGALKSDFNTGSFSYHLSQKNAVEFHSDHMRIRYALYPNVAMKYILRKLLKVLDASMCHSKAAPTIGYNIKPKHAEGYSSNEITHCWFWPKFSEFLKPRDVLITETGTANFGVLDCRFPKDVTAISQVLWGSIGYSVGAMFGAVLAVHDSKEPDRRTILVVGDGSLQLTITEISTCIRHNLKPIIFIINNDGYTIERLIHGLHASYNEINTKWGYQQIPKFFGAAENHFRTYCVKTPTDVEKLFSDKEFANADVIQVVELVMPMLDAPRVLVEQAKLTSKINKQ</sequence>
<reference key="1">
    <citation type="journal article" date="2002" name="Nature">
        <title>The genome sequence of Schizosaccharomyces pombe.</title>
        <authorList>
            <person name="Wood V."/>
            <person name="Gwilliam R."/>
            <person name="Rajandream M.A."/>
            <person name="Lyne M.H."/>
            <person name="Lyne R."/>
            <person name="Stewart A."/>
            <person name="Sgouros J.G."/>
            <person name="Peat N."/>
            <person name="Hayles J."/>
            <person name="Baker S.G."/>
            <person name="Basham D."/>
            <person name="Bowman S."/>
            <person name="Brooks K."/>
            <person name="Brown D."/>
            <person name="Brown S."/>
            <person name="Chillingworth T."/>
            <person name="Churcher C.M."/>
            <person name="Collins M."/>
            <person name="Connor R."/>
            <person name="Cronin A."/>
            <person name="Davis P."/>
            <person name="Feltwell T."/>
            <person name="Fraser A."/>
            <person name="Gentles S."/>
            <person name="Goble A."/>
            <person name="Hamlin N."/>
            <person name="Harris D.E."/>
            <person name="Hidalgo J."/>
            <person name="Hodgson G."/>
            <person name="Holroyd S."/>
            <person name="Hornsby T."/>
            <person name="Howarth S."/>
            <person name="Huckle E.J."/>
            <person name="Hunt S."/>
            <person name="Jagels K."/>
            <person name="James K.D."/>
            <person name="Jones L."/>
            <person name="Jones M."/>
            <person name="Leather S."/>
            <person name="McDonald S."/>
            <person name="McLean J."/>
            <person name="Mooney P."/>
            <person name="Moule S."/>
            <person name="Mungall K.L."/>
            <person name="Murphy L.D."/>
            <person name="Niblett D."/>
            <person name="Odell C."/>
            <person name="Oliver K."/>
            <person name="O'Neil S."/>
            <person name="Pearson D."/>
            <person name="Quail M.A."/>
            <person name="Rabbinowitsch E."/>
            <person name="Rutherford K.M."/>
            <person name="Rutter S."/>
            <person name="Saunders D."/>
            <person name="Seeger K."/>
            <person name="Sharp S."/>
            <person name="Skelton J."/>
            <person name="Simmonds M.N."/>
            <person name="Squares R."/>
            <person name="Squares S."/>
            <person name="Stevens K."/>
            <person name="Taylor K."/>
            <person name="Taylor R.G."/>
            <person name="Tivey A."/>
            <person name="Walsh S.V."/>
            <person name="Warren T."/>
            <person name="Whitehead S."/>
            <person name="Woodward J.R."/>
            <person name="Volckaert G."/>
            <person name="Aert R."/>
            <person name="Robben J."/>
            <person name="Grymonprez B."/>
            <person name="Weltjens I."/>
            <person name="Vanstreels E."/>
            <person name="Rieger M."/>
            <person name="Schaefer M."/>
            <person name="Mueller-Auer S."/>
            <person name="Gabel C."/>
            <person name="Fuchs M."/>
            <person name="Duesterhoeft A."/>
            <person name="Fritzc C."/>
            <person name="Holzer E."/>
            <person name="Moestl D."/>
            <person name="Hilbert H."/>
            <person name="Borzym K."/>
            <person name="Langer I."/>
            <person name="Beck A."/>
            <person name="Lehrach H."/>
            <person name="Reinhardt R."/>
            <person name="Pohl T.M."/>
            <person name="Eger P."/>
            <person name="Zimmermann W."/>
            <person name="Wedler H."/>
            <person name="Wambutt R."/>
            <person name="Purnelle B."/>
            <person name="Goffeau A."/>
            <person name="Cadieu E."/>
            <person name="Dreano S."/>
            <person name="Gloux S."/>
            <person name="Lelaure V."/>
            <person name="Mottier S."/>
            <person name="Galibert F."/>
            <person name="Aves S.J."/>
            <person name="Xiang Z."/>
            <person name="Hunt C."/>
            <person name="Moore K."/>
            <person name="Hurst S.M."/>
            <person name="Lucas M."/>
            <person name="Rochet M."/>
            <person name="Gaillardin C."/>
            <person name="Tallada V.A."/>
            <person name="Garzon A."/>
            <person name="Thode G."/>
            <person name="Daga R.R."/>
            <person name="Cruzado L."/>
            <person name="Jimenez J."/>
            <person name="Sanchez M."/>
            <person name="del Rey F."/>
            <person name="Benito J."/>
            <person name="Dominguez A."/>
            <person name="Revuelta J.L."/>
            <person name="Moreno S."/>
            <person name="Armstrong J."/>
            <person name="Forsburg S.L."/>
            <person name="Cerutti L."/>
            <person name="Lowe T."/>
            <person name="McCombie W.R."/>
            <person name="Paulsen I."/>
            <person name="Potashkin J."/>
            <person name="Shpakovski G.V."/>
            <person name="Ussery D."/>
            <person name="Barrell B.G."/>
            <person name="Nurse P."/>
        </authorList>
    </citation>
    <scope>NUCLEOTIDE SEQUENCE [LARGE SCALE GENOMIC DNA]</scope>
    <source>
        <strain>972 / ATCC 24843</strain>
    </source>
</reference>
<organism>
    <name type="scientific">Schizosaccharomyces pombe (strain 972 / ATCC 24843)</name>
    <name type="common">Fission yeast</name>
    <dbReference type="NCBI Taxonomy" id="284812"/>
    <lineage>
        <taxon>Eukaryota</taxon>
        <taxon>Fungi</taxon>
        <taxon>Dikarya</taxon>
        <taxon>Ascomycota</taxon>
        <taxon>Taphrinomycotina</taxon>
        <taxon>Schizosaccharomycetes</taxon>
        <taxon>Schizosaccharomycetales</taxon>
        <taxon>Schizosaccharomycetaceae</taxon>
        <taxon>Schizosaccharomyces</taxon>
    </lineage>
</organism>